<reference key="1">
    <citation type="journal article" date="2009" name="Appl. Environ. Microbiol.">
        <title>Three genomes from the phylum Acidobacteria provide insight into the lifestyles of these microorganisms in soils.</title>
        <authorList>
            <person name="Ward N.L."/>
            <person name="Challacombe J.F."/>
            <person name="Janssen P.H."/>
            <person name="Henrissat B."/>
            <person name="Coutinho P.M."/>
            <person name="Wu M."/>
            <person name="Xie G."/>
            <person name="Haft D.H."/>
            <person name="Sait M."/>
            <person name="Badger J."/>
            <person name="Barabote R.D."/>
            <person name="Bradley B."/>
            <person name="Brettin T.S."/>
            <person name="Brinkac L.M."/>
            <person name="Bruce D."/>
            <person name="Creasy T."/>
            <person name="Daugherty S.C."/>
            <person name="Davidsen T.M."/>
            <person name="DeBoy R.T."/>
            <person name="Detter J.C."/>
            <person name="Dodson R.J."/>
            <person name="Durkin A.S."/>
            <person name="Ganapathy A."/>
            <person name="Gwinn-Giglio M."/>
            <person name="Han C.S."/>
            <person name="Khouri H."/>
            <person name="Kiss H."/>
            <person name="Kothari S.P."/>
            <person name="Madupu R."/>
            <person name="Nelson K.E."/>
            <person name="Nelson W.C."/>
            <person name="Paulsen I."/>
            <person name="Penn K."/>
            <person name="Ren Q."/>
            <person name="Rosovitz M.J."/>
            <person name="Selengut J.D."/>
            <person name="Shrivastava S."/>
            <person name="Sullivan S.A."/>
            <person name="Tapia R."/>
            <person name="Thompson L.S."/>
            <person name="Watkins K.L."/>
            <person name="Yang Q."/>
            <person name="Yu C."/>
            <person name="Zafar N."/>
            <person name="Zhou L."/>
            <person name="Kuske C.R."/>
        </authorList>
    </citation>
    <scope>NUCLEOTIDE SEQUENCE [LARGE SCALE GENOMIC DNA]</scope>
    <source>
        <strain>ATCC 51196 / DSM 11244 / BCRC 80197 / JCM 7670 / NBRC 15755 / NCIMB 13165 / 161</strain>
    </source>
</reference>
<sequence>MEVILKEDIETLGHRGDIVKVADGYGRNYLLPKKLAMEATAANKAVIEQMKASAVRRSAKEKAEAEQLVAQLDAVALVFERKVGDHDHLFGSVTSSDIAQQLEQQGFHIDRRKVQLEEPLKQTGEFLIPVKLHREVTAHVKVTVKGEETAA</sequence>
<gene>
    <name evidence="1" type="primary">rplI</name>
    <name type="ordered locus">ACP_2064</name>
</gene>
<protein>
    <recommendedName>
        <fullName evidence="1">Large ribosomal subunit protein bL9</fullName>
    </recommendedName>
    <alternativeName>
        <fullName evidence="2">50S ribosomal protein L9</fullName>
    </alternativeName>
</protein>
<name>RL9_ACIC5</name>
<evidence type="ECO:0000255" key="1">
    <source>
        <dbReference type="HAMAP-Rule" id="MF_00503"/>
    </source>
</evidence>
<evidence type="ECO:0000305" key="2"/>
<organism>
    <name type="scientific">Acidobacterium capsulatum (strain ATCC 51196 / DSM 11244 / BCRC 80197 / JCM 7670 / NBRC 15755 / NCIMB 13165 / 161)</name>
    <dbReference type="NCBI Taxonomy" id="240015"/>
    <lineage>
        <taxon>Bacteria</taxon>
        <taxon>Pseudomonadati</taxon>
        <taxon>Acidobacteriota</taxon>
        <taxon>Terriglobia</taxon>
        <taxon>Terriglobales</taxon>
        <taxon>Acidobacteriaceae</taxon>
        <taxon>Acidobacterium</taxon>
    </lineage>
</organism>
<feature type="chain" id="PRO_1000145936" description="Large ribosomal subunit protein bL9">
    <location>
        <begin position="1"/>
        <end position="151"/>
    </location>
</feature>
<dbReference type="EMBL" id="CP001472">
    <property type="protein sequence ID" value="ACO34270.1"/>
    <property type="molecule type" value="Genomic_DNA"/>
</dbReference>
<dbReference type="RefSeq" id="WP_015897166.1">
    <property type="nucleotide sequence ID" value="NC_012483.1"/>
</dbReference>
<dbReference type="SMR" id="C1F902"/>
<dbReference type="FunCoup" id="C1F902">
    <property type="interactions" value="668"/>
</dbReference>
<dbReference type="STRING" id="240015.ACP_2064"/>
<dbReference type="KEGG" id="aca:ACP_2064"/>
<dbReference type="eggNOG" id="COG0359">
    <property type="taxonomic scope" value="Bacteria"/>
</dbReference>
<dbReference type="HOGENOM" id="CLU_078938_3_0_0"/>
<dbReference type="InParanoid" id="C1F902"/>
<dbReference type="OrthoDB" id="9788336at2"/>
<dbReference type="Proteomes" id="UP000002207">
    <property type="component" value="Chromosome"/>
</dbReference>
<dbReference type="GO" id="GO:1990904">
    <property type="term" value="C:ribonucleoprotein complex"/>
    <property type="evidence" value="ECO:0007669"/>
    <property type="project" value="UniProtKB-KW"/>
</dbReference>
<dbReference type="GO" id="GO:0005840">
    <property type="term" value="C:ribosome"/>
    <property type="evidence" value="ECO:0007669"/>
    <property type="project" value="UniProtKB-KW"/>
</dbReference>
<dbReference type="GO" id="GO:0019843">
    <property type="term" value="F:rRNA binding"/>
    <property type="evidence" value="ECO:0007669"/>
    <property type="project" value="UniProtKB-UniRule"/>
</dbReference>
<dbReference type="GO" id="GO:0003735">
    <property type="term" value="F:structural constituent of ribosome"/>
    <property type="evidence" value="ECO:0007669"/>
    <property type="project" value="InterPro"/>
</dbReference>
<dbReference type="GO" id="GO:0006412">
    <property type="term" value="P:translation"/>
    <property type="evidence" value="ECO:0007669"/>
    <property type="project" value="UniProtKB-UniRule"/>
</dbReference>
<dbReference type="Gene3D" id="3.10.430.100">
    <property type="entry name" value="Ribosomal protein L9, C-terminal domain"/>
    <property type="match status" value="1"/>
</dbReference>
<dbReference type="Gene3D" id="3.40.5.10">
    <property type="entry name" value="Ribosomal protein L9, N-terminal domain"/>
    <property type="match status" value="1"/>
</dbReference>
<dbReference type="HAMAP" id="MF_00503">
    <property type="entry name" value="Ribosomal_bL9"/>
    <property type="match status" value="1"/>
</dbReference>
<dbReference type="InterPro" id="IPR000244">
    <property type="entry name" value="Ribosomal_bL9"/>
</dbReference>
<dbReference type="InterPro" id="IPR009027">
    <property type="entry name" value="Ribosomal_bL9/RNase_H1_N"/>
</dbReference>
<dbReference type="InterPro" id="IPR020594">
    <property type="entry name" value="Ribosomal_bL9_bac/chp"/>
</dbReference>
<dbReference type="InterPro" id="IPR020069">
    <property type="entry name" value="Ribosomal_bL9_C"/>
</dbReference>
<dbReference type="InterPro" id="IPR036791">
    <property type="entry name" value="Ribosomal_bL9_C_sf"/>
</dbReference>
<dbReference type="InterPro" id="IPR020070">
    <property type="entry name" value="Ribosomal_bL9_N"/>
</dbReference>
<dbReference type="InterPro" id="IPR036935">
    <property type="entry name" value="Ribosomal_bL9_N_sf"/>
</dbReference>
<dbReference type="NCBIfam" id="TIGR00158">
    <property type="entry name" value="L9"/>
    <property type="match status" value="1"/>
</dbReference>
<dbReference type="PANTHER" id="PTHR21368">
    <property type="entry name" value="50S RIBOSOMAL PROTEIN L9"/>
    <property type="match status" value="1"/>
</dbReference>
<dbReference type="Pfam" id="PF03948">
    <property type="entry name" value="Ribosomal_L9_C"/>
    <property type="match status" value="1"/>
</dbReference>
<dbReference type="Pfam" id="PF01281">
    <property type="entry name" value="Ribosomal_L9_N"/>
    <property type="match status" value="1"/>
</dbReference>
<dbReference type="SUPFAM" id="SSF55658">
    <property type="entry name" value="L9 N-domain-like"/>
    <property type="match status" value="1"/>
</dbReference>
<dbReference type="SUPFAM" id="SSF55653">
    <property type="entry name" value="Ribosomal protein L9 C-domain"/>
    <property type="match status" value="1"/>
</dbReference>
<dbReference type="PROSITE" id="PS00651">
    <property type="entry name" value="RIBOSOMAL_L9"/>
    <property type="match status" value="1"/>
</dbReference>
<keyword id="KW-1185">Reference proteome</keyword>
<keyword id="KW-0687">Ribonucleoprotein</keyword>
<keyword id="KW-0689">Ribosomal protein</keyword>
<keyword id="KW-0694">RNA-binding</keyword>
<keyword id="KW-0699">rRNA-binding</keyword>
<accession>C1F902</accession>
<proteinExistence type="inferred from homology"/>
<comment type="function">
    <text evidence="1">Binds to the 23S rRNA.</text>
</comment>
<comment type="similarity">
    <text evidence="1">Belongs to the bacterial ribosomal protein bL9 family.</text>
</comment>